<accession>Q8MKI5</accession>
<organism>
    <name type="scientific">Canis lupus familiaris</name>
    <name type="common">Dog</name>
    <name type="synonym">Canis familiaris</name>
    <dbReference type="NCBI Taxonomy" id="9615"/>
    <lineage>
        <taxon>Eukaryota</taxon>
        <taxon>Metazoa</taxon>
        <taxon>Chordata</taxon>
        <taxon>Craniata</taxon>
        <taxon>Vertebrata</taxon>
        <taxon>Euteleostomi</taxon>
        <taxon>Mammalia</taxon>
        <taxon>Eutheria</taxon>
        <taxon>Laurasiatheria</taxon>
        <taxon>Carnivora</taxon>
        <taxon>Caniformia</taxon>
        <taxon>Canidae</taxon>
        <taxon>Canis</taxon>
    </lineage>
</organism>
<dbReference type="EC" id="3.4.22.56"/>
<dbReference type="EMBL" id="AB085580">
    <property type="protein sequence ID" value="BAB92962.1"/>
    <property type="molecule type" value="mRNA"/>
</dbReference>
<dbReference type="RefSeq" id="NP_001003042.1">
    <property type="nucleotide sequence ID" value="NM_001003042.1"/>
</dbReference>
<dbReference type="RefSeq" id="NP_001406229.1">
    <property type="nucleotide sequence ID" value="NM_001419300.1"/>
</dbReference>
<dbReference type="RefSeq" id="XP_038308236.1">
    <property type="nucleotide sequence ID" value="XM_038452308.1"/>
</dbReference>
<dbReference type="RefSeq" id="XP_038416350.1">
    <property type="nucleotide sequence ID" value="XM_038560422.1"/>
</dbReference>
<dbReference type="RefSeq" id="XP_038416351.1">
    <property type="nucleotide sequence ID" value="XM_038560423.1"/>
</dbReference>
<dbReference type="RefSeq" id="XP_038546165.1">
    <property type="nucleotide sequence ID" value="XM_038690237.1"/>
</dbReference>
<dbReference type="SMR" id="Q8MKI5"/>
<dbReference type="FunCoup" id="Q8MKI5">
    <property type="interactions" value="1260"/>
</dbReference>
<dbReference type="STRING" id="9615.ENSCAFP00000011475"/>
<dbReference type="ChEMBL" id="CHEMBL4879497"/>
<dbReference type="MEROPS" id="C14.003"/>
<dbReference type="PaxDb" id="9612-ENSCAFP00000038581"/>
<dbReference type="GeneID" id="403567"/>
<dbReference type="eggNOG" id="KOG3573">
    <property type="taxonomic scope" value="Eukaryota"/>
</dbReference>
<dbReference type="HOGENOM" id="CLU_036904_2_0_1"/>
<dbReference type="InParanoid" id="Q8MKI5"/>
<dbReference type="OrthoDB" id="6116485at2759"/>
<dbReference type="BRENDA" id="3.4.22.56">
    <property type="organism ID" value="1153"/>
</dbReference>
<dbReference type="Proteomes" id="UP000002254">
    <property type="component" value="Unplaced"/>
</dbReference>
<dbReference type="Proteomes" id="UP000694429">
    <property type="component" value="Unplaced"/>
</dbReference>
<dbReference type="Proteomes" id="UP000694542">
    <property type="component" value="Unplaced"/>
</dbReference>
<dbReference type="Proteomes" id="UP000805418">
    <property type="component" value="Unplaced"/>
</dbReference>
<dbReference type="GO" id="GO:0005737">
    <property type="term" value="C:cytoplasm"/>
    <property type="evidence" value="ECO:0000314"/>
    <property type="project" value="CAFA"/>
</dbReference>
<dbReference type="GO" id="GO:0031264">
    <property type="term" value="C:death-inducing signaling complex"/>
    <property type="evidence" value="ECO:0000318"/>
    <property type="project" value="GO_Central"/>
</dbReference>
<dbReference type="GO" id="GO:0004197">
    <property type="term" value="F:cysteine-type endopeptidase activity"/>
    <property type="evidence" value="ECO:0000250"/>
    <property type="project" value="UniProtKB"/>
</dbReference>
<dbReference type="GO" id="GO:0004175">
    <property type="term" value="F:endopeptidase activity"/>
    <property type="evidence" value="ECO:0000250"/>
    <property type="project" value="UniProtKB"/>
</dbReference>
<dbReference type="GO" id="GO:0008047">
    <property type="term" value="F:enzyme activator activity"/>
    <property type="evidence" value="ECO:0000318"/>
    <property type="project" value="GO_Central"/>
</dbReference>
<dbReference type="GO" id="GO:0006915">
    <property type="term" value="P:apoptotic process"/>
    <property type="evidence" value="ECO:0000318"/>
    <property type="project" value="GO_Central"/>
</dbReference>
<dbReference type="GO" id="GO:0030218">
    <property type="term" value="P:erythrocyte differentiation"/>
    <property type="evidence" value="ECO:0000318"/>
    <property type="project" value="GO_Central"/>
</dbReference>
<dbReference type="GO" id="GO:0097194">
    <property type="term" value="P:execution phase of apoptosis"/>
    <property type="evidence" value="ECO:0000318"/>
    <property type="project" value="GO_Central"/>
</dbReference>
<dbReference type="GO" id="GO:0008627">
    <property type="term" value="P:intrinsic apoptotic signaling pathway in response to osmotic stress"/>
    <property type="evidence" value="ECO:0000314"/>
    <property type="project" value="CAFA"/>
</dbReference>
<dbReference type="GO" id="GO:0030216">
    <property type="term" value="P:keratinocyte differentiation"/>
    <property type="evidence" value="ECO:0000318"/>
    <property type="project" value="GO_Central"/>
</dbReference>
<dbReference type="GO" id="GO:0030182">
    <property type="term" value="P:neuron differentiation"/>
    <property type="evidence" value="ECO:0000318"/>
    <property type="project" value="GO_Central"/>
</dbReference>
<dbReference type="GO" id="GO:1902004">
    <property type="term" value="P:positive regulation of amyloid-beta formation"/>
    <property type="evidence" value="ECO:0000250"/>
    <property type="project" value="UniProtKB"/>
</dbReference>
<dbReference type="GO" id="GO:0043065">
    <property type="term" value="P:positive regulation of apoptotic process"/>
    <property type="evidence" value="ECO:0000314"/>
    <property type="project" value="CAFA"/>
</dbReference>
<dbReference type="GO" id="GO:0043525">
    <property type="term" value="P:positive regulation of neuron apoptotic process"/>
    <property type="evidence" value="ECO:0000318"/>
    <property type="project" value="GO_Central"/>
</dbReference>
<dbReference type="GO" id="GO:0006508">
    <property type="term" value="P:proteolysis"/>
    <property type="evidence" value="ECO:0000250"/>
    <property type="project" value="UniProtKB"/>
</dbReference>
<dbReference type="GO" id="GO:0031647">
    <property type="term" value="P:regulation of protein stability"/>
    <property type="evidence" value="ECO:0000250"/>
    <property type="project" value="UniProtKB"/>
</dbReference>
<dbReference type="CDD" id="cd00032">
    <property type="entry name" value="CASc"/>
    <property type="match status" value="1"/>
</dbReference>
<dbReference type="FunFam" id="3.40.50.1460:FF:000001">
    <property type="entry name" value="Caspase-3 preproprotein"/>
    <property type="match status" value="1"/>
</dbReference>
<dbReference type="Gene3D" id="3.40.50.1460">
    <property type="match status" value="1"/>
</dbReference>
<dbReference type="InterPro" id="IPR029030">
    <property type="entry name" value="Caspase-like_dom_sf"/>
</dbReference>
<dbReference type="InterPro" id="IPR033139">
    <property type="entry name" value="Caspase_cys_AS"/>
</dbReference>
<dbReference type="InterPro" id="IPR016129">
    <property type="entry name" value="Caspase_his_AS"/>
</dbReference>
<dbReference type="InterPro" id="IPR002398">
    <property type="entry name" value="Pept_C14"/>
</dbReference>
<dbReference type="InterPro" id="IPR011600">
    <property type="entry name" value="Pept_C14_caspase"/>
</dbReference>
<dbReference type="InterPro" id="IPR002138">
    <property type="entry name" value="Pept_C14_p10"/>
</dbReference>
<dbReference type="InterPro" id="IPR001309">
    <property type="entry name" value="Pept_C14_p20"/>
</dbReference>
<dbReference type="InterPro" id="IPR015917">
    <property type="entry name" value="Pept_C14A"/>
</dbReference>
<dbReference type="PANTHER" id="PTHR10454">
    <property type="entry name" value="CASPASE"/>
    <property type="match status" value="1"/>
</dbReference>
<dbReference type="PANTHER" id="PTHR10454:SF198">
    <property type="entry name" value="CASPASE-3"/>
    <property type="match status" value="1"/>
</dbReference>
<dbReference type="Pfam" id="PF00656">
    <property type="entry name" value="Peptidase_C14"/>
    <property type="match status" value="1"/>
</dbReference>
<dbReference type="PRINTS" id="PR00376">
    <property type="entry name" value="IL1BCENZYME"/>
</dbReference>
<dbReference type="SMART" id="SM00115">
    <property type="entry name" value="CASc"/>
    <property type="match status" value="1"/>
</dbReference>
<dbReference type="SUPFAM" id="SSF52129">
    <property type="entry name" value="Caspase-like"/>
    <property type="match status" value="1"/>
</dbReference>
<dbReference type="PROSITE" id="PS01122">
    <property type="entry name" value="CASPASE_CYS"/>
    <property type="match status" value="1"/>
</dbReference>
<dbReference type="PROSITE" id="PS01121">
    <property type="entry name" value="CASPASE_HIS"/>
    <property type="match status" value="1"/>
</dbReference>
<dbReference type="PROSITE" id="PS50207">
    <property type="entry name" value="CASPASE_P10"/>
    <property type="match status" value="1"/>
</dbReference>
<dbReference type="PROSITE" id="PS50208">
    <property type="entry name" value="CASPASE_P20"/>
    <property type="match status" value="1"/>
</dbReference>
<gene>
    <name type="primary">CASP3</name>
</gene>
<reference key="1">
    <citation type="journal article" date="2004" name="J. Vet. Med. Sci.">
        <title>Characterization of canine caspase-3.</title>
        <authorList>
            <person name="Sano J."/>
            <person name="Oguma K."/>
            <person name="Kano R."/>
            <person name="Hasegawa A."/>
        </authorList>
    </citation>
    <scope>NUCLEOTIDE SEQUENCE [MRNA]</scope>
</reference>
<sequence>MENTENSVDAKSFKNAETKILHGSKSMDSGMSFDNSYKMDYPEMGLCIIINNKNFHKSTGMAPRSGTDVDAANLRETFTNLKYEVRNKNDLTCEEILELMNSVSKEDHSKRSSFVCVLLSHGDEGIIFGTNGPVDLRKVTGFFRGDYCRSLTGKPKLFIIQACRGTELDCGIETDSGIEDDMACQKIPVEADFLYAYSTAPGYYSWRNSKDGSWFIQSLCAMLKLYAHKLEFMHILTRVNRKVATEFESFSLDSAFHGKKQIPCIVSMLTKELYLYH</sequence>
<evidence type="ECO:0000250" key="1">
    <source>
        <dbReference type="UniProtKB" id="P29466"/>
    </source>
</evidence>
<evidence type="ECO:0000250" key="2">
    <source>
        <dbReference type="UniProtKB" id="P42574"/>
    </source>
</evidence>
<evidence type="ECO:0000250" key="3">
    <source>
        <dbReference type="UniProtKB" id="P70677"/>
    </source>
</evidence>
<evidence type="ECO:0000250" key="4">
    <source>
        <dbReference type="UniProtKB" id="Q60431"/>
    </source>
</evidence>
<evidence type="ECO:0000305" key="5"/>
<feature type="propeptide" id="PRO_0000004557" evidence="2">
    <location>
        <begin position="1"/>
        <end position="9"/>
    </location>
</feature>
<feature type="propeptide" id="PRO_0000004558" evidence="2">
    <location>
        <begin position="10"/>
        <end position="28"/>
    </location>
</feature>
<feature type="chain" id="PRO_0000004559" description="Caspase-3 subunit p17" evidence="2">
    <location>
        <begin position="29"/>
        <end position="175"/>
    </location>
</feature>
<feature type="chain" id="PRO_0000004560" description="Caspase-3 subunit p12" evidence="2">
    <location>
        <begin position="176"/>
        <end position="277"/>
    </location>
</feature>
<feature type="active site" evidence="1">
    <location>
        <position position="121"/>
    </location>
</feature>
<feature type="active site" evidence="1">
    <location>
        <position position="163"/>
    </location>
</feature>
<feature type="modified residue" description="N-acetylmethionine" evidence="2">
    <location>
        <position position="1"/>
    </location>
</feature>
<feature type="modified residue" description="N6-acetyllysine" evidence="3">
    <location>
        <position position="11"/>
    </location>
</feature>
<feature type="modified residue" description="Phosphoserine" evidence="2">
    <location>
        <position position="26"/>
    </location>
</feature>
<feature type="modified residue" description="S-nitrosocysteine; in inhibited form" evidence="2">
    <location>
        <position position="163"/>
    </location>
</feature>
<keyword id="KW-0007">Acetylation</keyword>
<keyword id="KW-0053">Apoptosis</keyword>
<keyword id="KW-0963">Cytoplasm</keyword>
<keyword id="KW-0378">Hydrolase</keyword>
<keyword id="KW-0597">Phosphoprotein</keyword>
<keyword id="KW-0645">Protease</keyword>
<keyword id="KW-1185">Reference proteome</keyword>
<keyword id="KW-0702">S-nitrosylation</keyword>
<keyword id="KW-0788">Thiol protease</keyword>
<keyword id="KW-0832">Ubl conjugation</keyword>
<keyword id="KW-0865">Zymogen</keyword>
<proteinExistence type="evidence at transcript level"/>
<comment type="function">
    <text evidence="2 3 4">Involved in the activation cascade of caspases responsible for apoptosis execution. At the onset of apoptosis, it proteolytically cleaves poly(ADP-ribose) polymerase PARP1 at a '216-Asp-|-Gly-217' bond. Cleaves and activates sterol regulatory element binding proteins (SREBPs) between the basic helix-loop-helix leucine zipper domain and the membrane attachment domain. Cleaves and activates caspase-6, -7 and -9 (CASP6, CASP7 and CASP9, respectively). Cleaves and inactivates interleukin-18 (IL18) (By similarity). Triggers cell adhesion in sympathetic neurons through RET cleavage (By similarity). Cleaves IL-1 beta between an Asp and an Ala, releasing the mature cytokine which is involved in a variety of inflammatory processes (By similarity). Cleaves and inhibits serine/threonine-protein kinase AKT1 in response to oxidative stress. Acts as an inhibitor of type I interferon production during virus-induced apoptosis by mediating cleavage of antiviral proteins CGAS, IRF3 and MAVS, thereby preventing cytokine overproduction. Also involved in pyroptosis by mediating cleavage and activation of gasdermin-E (GSDME) (By similarity). Cleaves XRCC4 and phospholipid scramblase proteins XKR4, XKR8 and XKR9, leading to promote phosphatidylserine exposure on apoptotic cell surface (By similarity). Cleaves BIRC6 following inhibition of BIRC6-caspase binding by DIABLO/SMAC (By similarity).</text>
</comment>
<comment type="catalytic activity">
    <reaction evidence="2">
        <text>Strict requirement for an Asp residue at positions P1 and P4. It has a preferred cleavage sequence of Asp-Xaa-Xaa-Asp-|- with a hydrophobic amino-acid residue at P2 and a hydrophilic amino-acid residue at P3, although Val or Ala are also accepted at this position.</text>
        <dbReference type="EC" id="3.4.22.56"/>
    </reaction>
</comment>
<comment type="activity regulation">
    <text evidence="2">Inhibited by BIRC6; following inhibition of BIRC6-caspase binding by DIABLO/SMAC, BIRC6 is subjected to caspase cleavage, leading to an increase in active caspases.</text>
</comment>
<comment type="subunit">
    <text evidence="2">Heterotetramer that consists of two anti-parallel arranged heterodimers, each one formed by a 17 kDa (p17) and a 12 kDa (p12) subunit. Interacts with BIRC6/bruce.</text>
</comment>
<comment type="subcellular location">
    <subcellularLocation>
        <location evidence="2">Cytoplasm</location>
    </subcellularLocation>
</comment>
<comment type="PTM">
    <text evidence="2">Cleavage by granzyme B, caspase-6, caspase-8 and caspase-10 generates the two active subunits. Additional processing of the propeptides is likely due to the autocatalytic activity of the activated protease. Active heterodimers between the small subunit of caspase-7 protease and the large subunit of caspase-3 also occur and vice versa.</text>
</comment>
<comment type="PTM">
    <text evidence="2">S-nitrosylated on its catalytic site cysteine in unstimulated cell lines and denitrosylated upon activation of the Fas apoptotic pathway, associated with an increase in intracellular caspase activity. Fas therefore activates caspase-3 not only by inducing the cleavage of the caspase zymogen to its active subunits, but also by stimulating the denitrosylation of its active site thiol.</text>
</comment>
<comment type="PTM">
    <text evidence="2">Ubiquitinated by BIRC6; this activity is inhibited by DIABLO/SMAC.</text>
</comment>
<comment type="similarity">
    <text evidence="5">Belongs to the peptidase C14A family.</text>
</comment>
<name>CASP3_CANLF</name>
<protein>
    <recommendedName>
        <fullName>Caspase-3</fullName>
        <shortName>CASP-3</shortName>
        <ecNumber>3.4.22.56</ecNumber>
    </recommendedName>
    <component>
        <recommendedName>
            <fullName>Caspase-3 subunit p17</fullName>
        </recommendedName>
    </component>
    <component>
        <recommendedName>
            <fullName>Caspase-3 subunit p12</fullName>
        </recommendedName>
    </component>
</protein>